<accession>A8ZTP9</accession>
<comment type="function">
    <text evidence="1">Displays ATPase and GTPase activities.</text>
</comment>
<comment type="similarity">
    <text evidence="1">Belongs to the RapZ-like family.</text>
</comment>
<proteinExistence type="inferred from homology"/>
<name>Y503_DESOH</name>
<feature type="chain" id="PRO_1000130747" description="Nucleotide-binding protein Dole_0503">
    <location>
        <begin position="1"/>
        <end position="293"/>
    </location>
</feature>
<feature type="binding site" evidence="1">
    <location>
        <begin position="11"/>
        <end position="18"/>
    </location>
    <ligand>
        <name>ATP</name>
        <dbReference type="ChEBI" id="CHEBI:30616"/>
    </ligand>
</feature>
<feature type="binding site" evidence="1">
    <location>
        <begin position="62"/>
        <end position="65"/>
    </location>
    <ligand>
        <name>GTP</name>
        <dbReference type="ChEBI" id="CHEBI:37565"/>
    </ligand>
</feature>
<reference key="1">
    <citation type="submission" date="2007-10" db="EMBL/GenBank/DDBJ databases">
        <title>Complete sequence of Desulfococcus oleovorans Hxd3.</title>
        <authorList>
            <consortium name="US DOE Joint Genome Institute"/>
            <person name="Copeland A."/>
            <person name="Lucas S."/>
            <person name="Lapidus A."/>
            <person name="Barry K."/>
            <person name="Glavina del Rio T."/>
            <person name="Dalin E."/>
            <person name="Tice H."/>
            <person name="Pitluck S."/>
            <person name="Kiss H."/>
            <person name="Brettin T."/>
            <person name="Bruce D."/>
            <person name="Detter J.C."/>
            <person name="Han C."/>
            <person name="Schmutz J."/>
            <person name="Larimer F."/>
            <person name="Land M."/>
            <person name="Hauser L."/>
            <person name="Kyrpides N."/>
            <person name="Kim E."/>
            <person name="Wawrik B."/>
            <person name="Richardson P."/>
        </authorList>
    </citation>
    <scope>NUCLEOTIDE SEQUENCE [LARGE SCALE GENOMIC DNA]</scope>
    <source>
        <strain>DSM 6200 / JCM 39069 / Hxd3</strain>
    </source>
</reference>
<dbReference type="EMBL" id="CP000859">
    <property type="protein sequence ID" value="ABW66313.1"/>
    <property type="molecule type" value="Genomic_DNA"/>
</dbReference>
<dbReference type="RefSeq" id="WP_012173932.1">
    <property type="nucleotide sequence ID" value="NC_009943.1"/>
</dbReference>
<dbReference type="SMR" id="A8ZTP9"/>
<dbReference type="STRING" id="96561.Dole_0503"/>
<dbReference type="KEGG" id="dol:Dole_0503"/>
<dbReference type="eggNOG" id="COG1660">
    <property type="taxonomic scope" value="Bacteria"/>
</dbReference>
<dbReference type="HOGENOM" id="CLU_059558_0_0_7"/>
<dbReference type="OrthoDB" id="9784461at2"/>
<dbReference type="Proteomes" id="UP000008561">
    <property type="component" value="Chromosome"/>
</dbReference>
<dbReference type="GO" id="GO:0005524">
    <property type="term" value="F:ATP binding"/>
    <property type="evidence" value="ECO:0007669"/>
    <property type="project" value="UniProtKB-UniRule"/>
</dbReference>
<dbReference type="GO" id="GO:0005525">
    <property type="term" value="F:GTP binding"/>
    <property type="evidence" value="ECO:0007669"/>
    <property type="project" value="UniProtKB-UniRule"/>
</dbReference>
<dbReference type="HAMAP" id="MF_00636">
    <property type="entry name" value="RapZ_like"/>
    <property type="match status" value="1"/>
</dbReference>
<dbReference type="InterPro" id="IPR027417">
    <property type="entry name" value="P-loop_NTPase"/>
</dbReference>
<dbReference type="InterPro" id="IPR005337">
    <property type="entry name" value="RapZ-like"/>
</dbReference>
<dbReference type="InterPro" id="IPR053930">
    <property type="entry name" value="RapZ-like_N"/>
</dbReference>
<dbReference type="InterPro" id="IPR053931">
    <property type="entry name" value="RapZ_C"/>
</dbReference>
<dbReference type="NCBIfam" id="NF003828">
    <property type="entry name" value="PRK05416.1"/>
    <property type="match status" value="1"/>
</dbReference>
<dbReference type="PANTHER" id="PTHR30448">
    <property type="entry name" value="RNASE ADAPTER PROTEIN RAPZ"/>
    <property type="match status" value="1"/>
</dbReference>
<dbReference type="PANTHER" id="PTHR30448:SF0">
    <property type="entry name" value="RNASE ADAPTER PROTEIN RAPZ"/>
    <property type="match status" value="1"/>
</dbReference>
<dbReference type="Pfam" id="PF22740">
    <property type="entry name" value="PapZ_C"/>
    <property type="match status" value="1"/>
</dbReference>
<dbReference type="Pfam" id="PF03668">
    <property type="entry name" value="RapZ-like_N"/>
    <property type="match status" value="1"/>
</dbReference>
<dbReference type="PIRSF" id="PIRSF005052">
    <property type="entry name" value="P-loopkin"/>
    <property type="match status" value="1"/>
</dbReference>
<dbReference type="SUPFAM" id="SSF52540">
    <property type="entry name" value="P-loop containing nucleoside triphosphate hydrolases"/>
    <property type="match status" value="1"/>
</dbReference>
<keyword id="KW-0067">ATP-binding</keyword>
<keyword id="KW-0342">GTP-binding</keyword>
<keyword id="KW-0547">Nucleotide-binding</keyword>
<keyword id="KW-1185">Reference proteome</keyword>
<protein>
    <recommendedName>
        <fullName evidence="1">Nucleotide-binding protein Dole_0503</fullName>
    </recommendedName>
</protein>
<sequence>MRNFIIHILTGLSGSGKSTALDVFEDAGFYCVDNMPVALLPKFLEIPVNTASGISGLAFVMDLREPDFLATYPSVFNDLKAQGYRLTVLFFEAGENVLIQRYSQTRRHHPLAGDKGLVSGIRRERELLEELRASSDTVIDTSTLTIHELKIRLLARIRKSADHMPMRIHVMSFGYKYGIPHDADIIMDVRFLPNPYFVDPLKHKNGTDADVAAHVLNHSTGSAFLEKFLNLIDFLLPLYKNEPKAYLTVAVGCTGGCHRSVAVATAVFNHMKKREERHVEISHRDLKEAGQTT</sequence>
<gene>
    <name type="ordered locus">Dole_0503</name>
</gene>
<evidence type="ECO:0000255" key="1">
    <source>
        <dbReference type="HAMAP-Rule" id="MF_00636"/>
    </source>
</evidence>
<organism>
    <name type="scientific">Desulfosudis oleivorans (strain DSM 6200 / JCM 39069 / Hxd3)</name>
    <name type="common">Desulfococcus oleovorans</name>
    <dbReference type="NCBI Taxonomy" id="96561"/>
    <lineage>
        <taxon>Bacteria</taxon>
        <taxon>Pseudomonadati</taxon>
        <taxon>Thermodesulfobacteriota</taxon>
        <taxon>Desulfobacteria</taxon>
        <taxon>Desulfobacterales</taxon>
        <taxon>Desulfosudaceae</taxon>
        <taxon>Desulfosudis</taxon>
    </lineage>
</organism>